<gene>
    <name type="primary">LYZ</name>
</gene>
<keyword id="KW-0929">Antimicrobial</keyword>
<keyword id="KW-0081">Bacteriolytic enzyme</keyword>
<keyword id="KW-0903">Direct protein sequencing</keyword>
<keyword id="KW-1015">Disulfide bond</keyword>
<keyword id="KW-0326">Glycosidase</keyword>
<keyword id="KW-0378">Hydrolase</keyword>
<keyword id="KW-0964">Secreted</keyword>
<proteinExistence type="evidence at protein level"/>
<accession>Q7LZT2</accession>
<organism>
    <name type="scientific">Tragopan temminckii</name>
    <name type="common">Temminck's tragopan</name>
    <name type="synonym">Satyra temminckii</name>
    <dbReference type="NCBI Taxonomy" id="9071"/>
    <lineage>
        <taxon>Eukaryota</taxon>
        <taxon>Metazoa</taxon>
        <taxon>Chordata</taxon>
        <taxon>Craniata</taxon>
        <taxon>Vertebrata</taxon>
        <taxon>Euteleostomi</taxon>
        <taxon>Archelosauria</taxon>
        <taxon>Archosauria</taxon>
        <taxon>Dinosauria</taxon>
        <taxon>Saurischia</taxon>
        <taxon>Theropoda</taxon>
        <taxon>Coelurosauria</taxon>
        <taxon>Aves</taxon>
        <taxon>Neognathae</taxon>
        <taxon>Galloanserae</taxon>
        <taxon>Galliformes</taxon>
        <taxon>Phasianidae</taxon>
        <taxon>Phasianinae</taxon>
        <taxon>Tragopan</taxon>
    </lineage>
</organism>
<feature type="chain" id="PRO_0000208875" description="Lysozyme C">
    <location>
        <begin position="1"/>
        <end position="129"/>
    </location>
</feature>
<feature type="domain" description="C-type lysozyme" evidence="2">
    <location>
        <begin position="1"/>
        <end position="129"/>
    </location>
</feature>
<feature type="active site" evidence="2">
    <location>
        <position position="35"/>
    </location>
</feature>
<feature type="active site" evidence="2">
    <location>
        <position position="52"/>
    </location>
</feature>
<feature type="disulfide bond" evidence="2">
    <location>
        <begin position="6"/>
        <end position="127"/>
    </location>
</feature>
<feature type="disulfide bond" evidence="2">
    <location>
        <begin position="30"/>
        <end position="115"/>
    </location>
</feature>
<feature type="disulfide bond" evidence="2">
    <location>
        <begin position="64"/>
        <end position="80"/>
    </location>
</feature>
<feature type="disulfide bond" evidence="2">
    <location>
        <begin position="76"/>
        <end position="94"/>
    </location>
</feature>
<evidence type="ECO:0000250" key="1"/>
<evidence type="ECO:0000255" key="2">
    <source>
        <dbReference type="PROSITE-ProRule" id="PRU00680"/>
    </source>
</evidence>
<comment type="function">
    <text evidence="2">Lysozymes have primarily a bacteriolytic function; those in tissues and body fluids are associated with the monocyte-macrophage system and enhance the activity of immunoagents.</text>
</comment>
<comment type="catalytic activity">
    <reaction>
        <text>Hydrolysis of (1-&gt;4)-beta-linkages between N-acetylmuramic acid and N-acetyl-D-glucosamine residues in a peptidoglycan and between N-acetyl-D-glucosamine residues in chitodextrins.</text>
        <dbReference type="EC" id="3.2.1.17"/>
    </reaction>
</comment>
<comment type="subunit">
    <text evidence="1">Monomer.</text>
</comment>
<comment type="subcellular location">
    <subcellularLocation>
        <location>Secreted</location>
    </subcellularLocation>
</comment>
<comment type="miscellaneous">
    <text>Lysozyme C is capable of both hydrolysis and transglycosylation; it also shows a slight esterase activity. It acts rapidly on both peptide-substituted and unsubstituted peptidoglycan, and slowly on chitin oligosaccharides.</text>
</comment>
<comment type="similarity">
    <text evidence="2">Belongs to the glycosyl hydrolase 22 family.</text>
</comment>
<sequence>KVYGRCELAAAMKRLGLDNYRGYSLGNWVCAAKFESNFNTHATNRNTDGSTDYGILQINSRWWCNDGRTPGSRNLCNIPCSALLSSDITASVNCAKKIVSGGNGMSAWVAWRNRCKGTDVHAWIRGCRL</sequence>
<dbReference type="EC" id="3.2.1.17"/>
<dbReference type="PIR" id="JC5544">
    <property type="entry name" value="JC5544"/>
</dbReference>
<dbReference type="BMRB" id="Q7LZT2"/>
<dbReference type="SMR" id="Q7LZT2"/>
<dbReference type="CAZy" id="GH22">
    <property type="family name" value="Glycoside Hydrolase Family 22"/>
</dbReference>
<dbReference type="GO" id="GO:0005576">
    <property type="term" value="C:extracellular region"/>
    <property type="evidence" value="ECO:0007669"/>
    <property type="project" value="UniProtKB-SubCell"/>
</dbReference>
<dbReference type="GO" id="GO:0003796">
    <property type="term" value="F:lysozyme activity"/>
    <property type="evidence" value="ECO:0007669"/>
    <property type="project" value="UniProtKB-EC"/>
</dbReference>
<dbReference type="GO" id="GO:0050829">
    <property type="term" value="P:defense response to Gram-negative bacterium"/>
    <property type="evidence" value="ECO:0007669"/>
    <property type="project" value="TreeGrafter"/>
</dbReference>
<dbReference type="GO" id="GO:0050830">
    <property type="term" value="P:defense response to Gram-positive bacterium"/>
    <property type="evidence" value="ECO:0007669"/>
    <property type="project" value="TreeGrafter"/>
</dbReference>
<dbReference type="GO" id="GO:0031640">
    <property type="term" value="P:killing of cells of another organism"/>
    <property type="evidence" value="ECO:0007669"/>
    <property type="project" value="UniProtKB-KW"/>
</dbReference>
<dbReference type="CDD" id="cd16897">
    <property type="entry name" value="LYZ_C"/>
    <property type="match status" value="1"/>
</dbReference>
<dbReference type="FunFam" id="1.10.530.10:FF:000001">
    <property type="entry name" value="Lysozyme C"/>
    <property type="match status" value="1"/>
</dbReference>
<dbReference type="Gene3D" id="1.10.530.10">
    <property type="match status" value="1"/>
</dbReference>
<dbReference type="InterPro" id="IPR001916">
    <property type="entry name" value="Glyco_hydro_22"/>
</dbReference>
<dbReference type="InterPro" id="IPR019799">
    <property type="entry name" value="Glyco_hydro_22_CS"/>
</dbReference>
<dbReference type="InterPro" id="IPR000974">
    <property type="entry name" value="Glyco_hydro_22_lys"/>
</dbReference>
<dbReference type="InterPro" id="IPR023346">
    <property type="entry name" value="Lysozyme-like_dom_sf"/>
</dbReference>
<dbReference type="PANTHER" id="PTHR11407">
    <property type="entry name" value="LYSOZYME C"/>
    <property type="match status" value="1"/>
</dbReference>
<dbReference type="PANTHER" id="PTHR11407:SF28">
    <property type="entry name" value="LYSOZYME C"/>
    <property type="match status" value="1"/>
</dbReference>
<dbReference type="Pfam" id="PF00062">
    <property type="entry name" value="Lys"/>
    <property type="match status" value="1"/>
</dbReference>
<dbReference type="PRINTS" id="PR00137">
    <property type="entry name" value="LYSOZYME"/>
</dbReference>
<dbReference type="PRINTS" id="PR00135">
    <property type="entry name" value="LYZLACT"/>
</dbReference>
<dbReference type="SMART" id="SM00263">
    <property type="entry name" value="LYZ1"/>
    <property type="match status" value="1"/>
</dbReference>
<dbReference type="SUPFAM" id="SSF53955">
    <property type="entry name" value="Lysozyme-like"/>
    <property type="match status" value="1"/>
</dbReference>
<dbReference type="PROSITE" id="PS00128">
    <property type="entry name" value="GLYCOSYL_HYDROL_F22_1"/>
    <property type="match status" value="1"/>
</dbReference>
<dbReference type="PROSITE" id="PS51348">
    <property type="entry name" value="GLYCOSYL_HYDROL_F22_2"/>
    <property type="match status" value="1"/>
</dbReference>
<reference key="1">
    <citation type="journal article" date="2000" name="Kichin Kitosan Kenkyu">
        <title>The amino acid sequence of Temminck's tragopan lysozyme and evaluation of the influence of amino acid substitution for enzymatic activity against chitin oligomer.</title>
        <authorList>
            <person name="Araki T."/>
            <person name="Seki S."/>
            <person name="Torikata T."/>
        </authorList>
    </citation>
    <scope>PROTEIN SEQUENCE</scope>
</reference>
<protein>
    <recommendedName>
        <fullName>Lysozyme C</fullName>
        <ecNumber>3.2.1.17</ecNumber>
    </recommendedName>
    <alternativeName>
        <fullName>1,4-beta-N-acetylmuramidase</fullName>
    </alternativeName>
</protein>
<name>LYSC_TRATE</name>